<reference key="1">
    <citation type="journal article" date="2008" name="Nat. Biotechnol.">
        <title>Genome sequencing and analysis of the filamentous fungus Penicillium chrysogenum.</title>
        <authorList>
            <person name="van den Berg M.A."/>
            <person name="Albang R."/>
            <person name="Albermann K."/>
            <person name="Badger J.H."/>
            <person name="Daran J.-M."/>
            <person name="Driessen A.J.M."/>
            <person name="Garcia-Estrada C."/>
            <person name="Fedorova N.D."/>
            <person name="Harris D.M."/>
            <person name="Heijne W.H.M."/>
            <person name="Joardar V.S."/>
            <person name="Kiel J.A.K.W."/>
            <person name="Kovalchuk A."/>
            <person name="Martin J.F."/>
            <person name="Nierman W.C."/>
            <person name="Nijland J.G."/>
            <person name="Pronk J.T."/>
            <person name="Roubos J.A."/>
            <person name="van der Klei I.J."/>
            <person name="van Peij N.N.M.E."/>
            <person name="Veenhuis M."/>
            <person name="von Doehren H."/>
            <person name="Wagner C."/>
            <person name="Wortman J.R."/>
            <person name="Bovenberg R.A.L."/>
        </authorList>
    </citation>
    <scope>NUCLEOTIDE SEQUENCE [LARGE SCALE GENOMIC DNA]</scope>
    <source>
        <strain>ATCC 28089 / DSM 1075 / NRRL 1951 / Wisconsin 54-1255</strain>
    </source>
</reference>
<reference key="2">
    <citation type="journal article" date="2022" name="J. Fungi">
        <title>Biosynthesis of xylariolide D in Penicillium crustosum implies a chain branching reaction catalyzed by a highly reducing polyketide synthase.</title>
        <authorList>
            <person name="Stierle S.A."/>
            <person name="Li S.M."/>
        </authorList>
    </citation>
    <scope>FUNCTION</scope>
</reference>
<evidence type="ECO:0000255" key="1"/>
<evidence type="ECO:0000255" key="2">
    <source>
        <dbReference type="PROSITE-ProRule" id="PRU00227"/>
    </source>
</evidence>
<evidence type="ECO:0000256" key="3">
    <source>
        <dbReference type="SAM" id="MobiDB-lite"/>
    </source>
</evidence>
<evidence type="ECO:0000269" key="4">
    <source>
    </source>
</evidence>
<evidence type="ECO:0000303" key="5">
    <source>
    </source>
</evidence>
<evidence type="ECO:0000305" key="6">
    <source>
    </source>
</evidence>
<name>XILB_PENRW</name>
<comment type="function">
    <text evidence="4 6">Transcription factor; part of the gene cluster that mediates the biosynthesis of the 6-methyl-2-pyrone derivative xylariolide D (PubMed:35628749). May play a role in the regulation of the expression of the highly reducing polyketide synthase xilA and the cytochroe P450 monooxygenase xilC (Probable).</text>
</comment>
<comment type="subcellular location">
    <subcellularLocation>
        <location evidence="2">Nucleus</location>
    </subcellularLocation>
</comment>
<proteinExistence type="inferred from homology"/>
<dbReference type="EMBL" id="AM920431">
    <property type="protein sequence ID" value="CAP93158.1"/>
    <property type="molecule type" value="Genomic_DNA"/>
</dbReference>
<dbReference type="RefSeq" id="XP_002560838.1">
    <property type="nucleotide sequence ID" value="XM_002560792.1"/>
</dbReference>
<dbReference type="VEuPathDB" id="FungiDB:PCH_Pc16g04880"/>
<dbReference type="eggNOG" id="ENOG502SIZG">
    <property type="taxonomic scope" value="Eukaryota"/>
</dbReference>
<dbReference type="HOGENOM" id="CLU_022665_0_0_1"/>
<dbReference type="OMA" id="IFDSVCW"/>
<dbReference type="OrthoDB" id="5344325at2759"/>
<dbReference type="BioCyc" id="PCHR:PC16G04880-MONOMER"/>
<dbReference type="Proteomes" id="UP000000724">
    <property type="component" value="Contig Pc00c16"/>
</dbReference>
<dbReference type="GO" id="GO:0005634">
    <property type="term" value="C:nucleus"/>
    <property type="evidence" value="ECO:0007669"/>
    <property type="project" value="UniProtKB-SubCell"/>
</dbReference>
<dbReference type="GO" id="GO:0003677">
    <property type="term" value="F:DNA binding"/>
    <property type="evidence" value="ECO:0007669"/>
    <property type="project" value="UniProtKB-KW"/>
</dbReference>
<dbReference type="GO" id="GO:0008270">
    <property type="term" value="F:zinc ion binding"/>
    <property type="evidence" value="ECO:0007669"/>
    <property type="project" value="InterPro"/>
</dbReference>
<dbReference type="GO" id="GO:0006351">
    <property type="term" value="P:DNA-templated transcription"/>
    <property type="evidence" value="ECO:0007669"/>
    <property type="project" value="InterPro"/>
</dbReference>
<dbReference type="CDD" id="cd12148">
    <property type="entry name" value="fungal_TF_MHR"/>
    <property type="match status" value="1"/>
</dbReference>
<dbReference type="InterPro" id="IPR050613">
    <property type="entry name" value="Sec_Metabolite_Reg"/>
</dbReference>
<dbReference type="InterPro" id="IPR007219">
    <property type="entry name" value="Transcription_factor_dom_fun"/>
</dbReference>
<dbReference type="PANTHER" id="PTHR31001:SF87">
    <property type="entry name" value="COL-21"/>
    <property type="match status" value="1"/>
</dbReference>
<dbReference type="PANTHER" id="PTHR31001">
    <property type="entry name" value="UNCHARACTERIZED TRANSCRIPTIONAL REGULATORY PROTEIN"/>
    <property type="match status" value="1"/>
</dbReference>
<dbReference type="Pfam" id="PF04082">
    <property type="entry name" value="Fungal_trans"/>
    <property type="match status" value="1"/>
</dbReference>
<dbReference type="SMART" id="SM00906">
    <property type="entry name" value="Fungal_trans"/>
    <property type="match status" value="1"/>
</dbReference>
<feature type="chain" id="PRO_0000459618" description="Transcription factor xilB">
    <location>
        <begin position="1"/>
        <end position="671"/>
    </location>
</feature>
<feature type="DNA-binding region" description="Zn(2)-C6 fungal-type" evidence="2">
    <location>
        <begin position="11"/>
        <end position="46"/>
    </location>
</feature>
<feature type="region of interest" description="Disordered" evidence="3">
    <location>
        <begin position="48"/>
        <end position="90"/>
    </location>
</feature>
<feature type="region of interest" description="Fungal transcription factor domain" evidence="1">
    <location>
        <begin position="148"/>
        <end position="593"/>
    </location>
</feature>
<feature type="region of interest" description="Disordered" evidence="3">
    <location>
        <begin position="629"/>
        <end position="650"/>
    </location>
</feature>
<feature type="compositionally biased region" description="Pro residues" evidence="3">
    <location>
        <begin position="49"/>
        <end position="62"/>
    </location>
</feature>
<feature type="compositionally biased region" description="Basic and acidic residues" evidence="3">
    <location>
        <begin position="77"/>
        <end position="90"/>
    </location>
</feature>
<organism>
    <name type="scientific">Penicillium rubens (strain ATCC 28089 / DSM 1075 / NRRL 1951 / Wisconsin 54-1255)</name>
    <name type="common">Penicillium chrysogenum</name>
    <dbReference type="NCBI Taxonomy" id="500485"/>
    <lineage>
        <taxon>Eukaryota</taxon>
        <taxon>Fungi</taxon>
        <taxon>Dikarya</taxon>
        <taxon>Ascomycota</taxon>
        <taxon>Pezizomycotina</taxon>
        <taxon>Eurotiomycetes</taxon>
        <taxon>Eurotiomycetidae</taxon>
        <taxon>Eurotiales</taxon>
        <taxon>Aspergillaceae</taxon>
        <taxon>Penicillium</taxon>
        <taxon>Penicillium chrysogenum species complex</taxon>
    </lineage>
</organism>
<sequence length="671" mass="76004">MQGQKRRVRTCHSCYTRKQKASESDSICDRQYPCNHCTRRRRPEECVYGPPPVKVPSCPPVPADQSETQPRPVESARPTRETPVDDSEAHWSREHSALARSFGYFEDSNSNTMALLRRLELPDQSDTELKNAWPSTWETIHHELDLMPERQIIDFLVQYFVYELNWMKQVIHVPSFLANYQLWWAKDKIVEIADVEFAALIARICSYATQFLPSPSHTVDQIRGRSLADIRDTCSNIGNKLATACETLDWKGTLVRVQHIIFAALKVSCEGRTSQFWEGIGSACRAAQKAGIHTDTTGLESQLAKDSAQELERDVQRRTFCSLYVLDSHLSRQLDRIPFLSNHLIEETLPRLRLIPDIGNIPTETATRAPDIFTERLMQVQLGLFWRGLGLQRTCEFDPTESERIYEKFNSEYLNNLHPAFAIAHPDTTLDKALPKLPMQRQLLYIAIFDSICWNFRPLLLLKPDQVASLAPYKKVLLRSQKRRLGMAALKVLEAVAALHTMFGGSYTRFSAIIFNSFEPAILLLNLCSHADFPFDQDDNSTSLVGTKVRMTYRIAMQAVEQAIHRLQMLADLSDMAASGARVATLLFARSVQPKQSSSPPALTLSVSGSLGPSQFPTPIERYGEQENWPSLEAGDPYSMPDNFPSMAQDSFPSPQLSSLKFPVVWGEAFF</sequence>
<accession>B6H998</accession>
<gene>
    <name evidence="5" type="primary">xilB</name>
    <name type="ORF">Pc16g04880</name>
    <name type="ORF">PCH_Pc16g04880</name>
</gene>
<protein>
    <recommendedName>
        <fullName evidence="5">Transcription factor xilB</fullName>
    </recommendedName>
    <alternativeName>
        <fullName evidence="5">Xylariolide D biosynthesis cluster protein B</fullName>
    </alternativeName>
</protein>
<keyword id="KW-0238">DNA-binding</keyword>
<keyword id="KW-0479">Metal-binding</keyword>
<keyword id="KW-0539">Nucleus</keyword>
<keyword id="KW-1185">Reference proteome</keyword>
<keyword id="KW-0804">Transcription</keyword>
<keyword id="KW-0805">Transcription regulation</keyword>
<keyword id="KW-0862">Zinc</keyword>